<comment type="function">
    <text evidence="1">Can stimulate E2F-dependent transcription. Binds DNA cooperatively with E2F family members through the E2 recognition site, 5'-TTTC[CG]CGC-3', found in the promoter region of a number of genes whose products are involved in cell cycle regulation or in DNA replication. The TFDP2:E2F complex functions in the control of cell-cycle progression from G1 to S phase. The E2F1:DP complex appears to mediate both cell proliferation and apoptosis. Blocks adipocyte differentiation by repressing CEBPA binding to its target gene promoters.</text>
</comment>
<comment type="subunit">
    <text evidence="1 5">Component of the DRTF1/E2F transcription factor complex. Forms heterodimers with E2F family members. The complex can interact with hypophosphorylated retinoblastoma protein RB1 and related proteins (RBL1 and RBL2) that inhibit the E2F transactivation domain. During the cell cycle, RB becomes phosphorylated in mid-to-late G1 phase, detaches from the DRTF1/E2F complex rendering E2F transcriptionally active. Interacts with GMCL (By similarity). Component of the DREAM complex (also named LINC complex) at least composed of E2F4, E2F5, LIN9, LIN37, LIN52, LIN54, MYBL1, MYBL2, RBL1, RBL2, RBBP4, TFDP1 and TFDP2. The complex exists in quiescent cells where it represses cell cycle-dependent genes. It dissociates in S phase when LIN9, LIN37, LIN52 and LIN54 form a subcomplex that binds to MYBL2. The complex TFDP2:E2F1 interacts with CEBPA; the interaction prevents CEBPA binding to target gene promoters and represses its transcriptional activity (By similarity).</text>
</comment>
<comment type="interaction">
    <interactant intactId="EBI-8077763">
        <id>Q64163-4</id>
    </interactant>
    <interactant intactId="EBI-7225685">
        <id>Q61502</id>
        <label>E2f5</label>
    </interactant>
    <organismsDiffer>false</organismsDiffer>
    <experiments>2</experiments>
</comment>
<comment type="interaction">
    <interactant intactId="EBI-8077763">
        <id>Q64163-4</id>
    </interactant>
    <interactant intactId="EBI-356480">
        <id>P62259</id>
        <label>Ywhae</label>
    </interactant>
    <organismsDiffer>false</organismsDiffer>
    <experiments>6</experiments>
</comment>
<comment type="subcellular location">
    <subcellularLocation>
        <location>Nucleus</location>
    </subcellularLocation>
</comment>
<comment type="alternative products">
    <event type="alternative splicing"/>
    <isoform>
        <id>Q64163-1</id>
        <name>Alpha</name>
        <sequence type="displayed"/>
    </isoform>
    <isoform>
        <id>Q64163-2</id>
        <name>Beta</name>
        <sequence type="described" ref="VSP_001355 VSP_001356"/>
    </isoform>
    <isoform>
        <id>Q64163-3</id>
        <name>Gamma</name>
        <sequence type="described" ref="VSP_001355 VSP_001356 VSP_001357"/>
    </isoform>
    <isoform>
        <id>Q64163-4</id>
        <name>Delta</name>
        <sequence type="described" ref="VSP_001355"/>
    </isoform>
    <text>Additional isoforms seem to exist.</text>
</comment>
<comment type="tissue specificity">
    <text>Expressed in all tissues examined. Highest levels in spleen and heart.</text>
</comment>
<comment type="PTM">
    <text>Phosphorylation by E2F1-bound cyclin A-CDK2, in the S phase, inhibits E2F-mediated DNA binding and transactivation.</text>
</comment>
<comment type="similarity">
    <text evidence="7">Belongs to the E2F/DP family.</text>
</comment>
<feature type="initiator methionine" description="Removed" evidence="1">
    <location>
        <position position="1"/>
    </location>
</feature>
<feature type="chain" id="PRO_0000219478" description="Transcription factor Dp-2">
    <location>
        <begin position="2"/>
        <end position="446"/>
    </location>
</feature>
<feature type="DNA-binding region" evidence="2">
    <location>
        <begin position="129"/>
        <end position="210"/>
    </location>
</feature>
<feature type="region of interest" description="Interaction with CEBPA" evidence="1">
    <location>
        <begin position="60"/>
        <end position="82"/>
    </location>
</feature>
<feature type="region of interest" description="Dimerization" evidence="2">
    <location>
        <begin position="219"/>
        <end position="292"/>
    </location>
</feature>
<feature type="region of interest" description="DCB1">
    <location>
        <begin position="229"/>
        <end position="261"/>
    </location>
</feature>
<feature type="region of interest" description="DCB2">
    <location>
        <begin position="274"/>
        <end position="330"/>
    </location>
</feature>
<feature type="region of interest" description="Disordered" evidence="3">
    <location>
        <begin position="404"/>
        <end position="446"/>
    </location>
</feature>
<feature type="short sequence motif" description="Nuclear localization signal" evidence="4">
    <location>
        <begin position="103"/>
        <end position="118"/>
    </location>
</feature>
<feature type="short sequence motif" description="DEF box">
    <location>
        <begin position="176"/>
        <end position="210"/>
    </location>
</feature>
<feature type="compositionally biased region" description="Low complexity" evidence="3">
    <location>
        <begin position="406"/>
        <end position="419"/>
    </location>
</feature>
<feature type="compositionally biased region" description="Acidic residues" evidence="3">
    <location>
        <begin position="431"/>
        <end position="446"/>
    </location>
</feature>
<feature type="modified residue" description="N-acetylthreonine" evidence="1">
    <location>
        <position position="2"/>
    </location>
</feature>
<feature type="modified residue" description="Phosphoserine; by CDK2" evidence="1 2">
    <location>
        <position position="24"/>
    </location>
</feature>
<feature type="modified residue" description="Phosphoserine; by CDK2" evidence="2">
    <location>
        <position position="42"/>
    </location>
</feature>
<feature type="modified residue" description="Phosphoserine" evidence="1">
    <location>
        <position position="122"/>
    </location>
</feature>
<feature type="splice variant" id="VSP_001355" description="In isoform Beta, isoform Gamma and isoform Delta." evidence="6">
    <location>
        <begin position="1"/>
        <end position="61"/>
    </location>
</feature>
<feature type="splice variant" id="VSP_001356" description="In isoform Beta and isoform Gamma." evidence="6">
    <location>
        <begin position="103"/>
        <end position="118"/>
    </location>
</feature>
<feature type="splice variant" id="VSP_001357" description="In isoform Gamma." evidence="6">
    <original>S</original>
    <variation>SQ</variation>
    <location>
        <position position="173"/>
    </location>
</feature>
<dbReference type="EMBL" id="S79780">
    <property type="protein sequence ID" value="AAB35506.2"/>
    <property type="molecule type" value="mRNA"/>
</dbReference>
<dbReference type="CCDS" id="CCDS23413.1">
    <molecule id="Q64163-4"/>
</dbReference>
<dbReference type="SMR" id="Q64163"/>
<dbReference type="DIP" id="DIP-24228N"/>
<dbReference type="FunCoup" id="Q64163">
    <property type="interactions" value="1488"/>
</dbReference>
<dbReference type="IntAct" id="Q64163">
    <property type="interactions" value="3"/>
</dbReference>
<dbReference type="MINT" id="Q64163"/>
<dbReference type="STRING" id="10090.ENSMUSP00000128260"/>
<dbReference type="PhosphoSitePlus" id="Q64163"/>
<dbReference type="PaxDb" id="10090-ENSMUSP00000128260"/>
<dbReference type="PeptideAtlas" id="Q64163"/>
<dbReference type="ProteomicsDB" id="262887">
    <molecule id="Q64163-1"/>
</dbReference>
<dbReference type="ProteomicsDB" id="262888">
    <molecule id="Q64163-2"/>
</dbReference>
<dbReference type="ProteomicsDB" id="262889">
    <molecule id="Q64163-3"/>
</dbReference>
<dbReference type="ProteomicsDB" id="262890">
    <molecule id="Q64163-4"/>
</dbReference>
<dbReference type="AGR" id="MGI:107167"/>
<dbReference type="MGI" id="MGI:107167">
    <property type="gene designation" value="Tfdp2"/>
</dbReference>
<dbReference type="eggNOG" id="KOG2829">
    <property type="taxonomic scope" value="Eukaryota"/>
</dbReference>
<dbReference type="InParanoid" id="Q64163"/>
<dbReference type="PhylomeDB" id="Q64163"/>
<dbReference type="Reactome" id="R-MMU-1538133">
    <property type="pathway name" value="G0 and Early G1"/>
</dbReference>
<dbReference type="Reactome" id="R-MMU-2173796">
    <property type="pathway name" value="SMAD2/SMAD3:SMAD4 heterotrimer regulates transcription"/>
</dbReference>
<dbReference type="Reactome" id="R-MMU-69231">
    <property type="pathway name" value="Cyclin D associated events in G1"/>
</dbReference>
<dbReference type="Reactome" id="R-MMU-8953750">
    <property type="pathway name" value="Transcriptional Regulation by E2F6"/>
</dbReference>
<dbReference type="ChiTaRS" id="Tfdp2">
    <property type="organism name" value="mouse"/>
</dbReference>
<dbReference type="PRO" id="PR:Q64163"/>
<dbReference type="Proteomes" id="UP000000589">
    <property type="component" value="Unplaced"/>
</dbReference>
<dbReference type="RNAct" id="Q64163">
    <property type="molecule type" value="protein"/>
</dbReference>
<dbReference type="GO" id="GO:0005635">
    <property type="term" value="C:nuclear envelope"/>
    <property type="evidence" value="ECO:0000304"/>
    <property type="project" value="MGI"/>
</dbReference>
<dbReference type="GO" id="GO:0005654">
    <property type="term" value="C:nucleoplasm"/>
    <property type="evidence" value="ECO:0000304"/>
    <property type="project" value="Reactome"/>
</dbReference>
<dbReference type="GO" id="GO:0005667">
    <property type="term" value="C:transcription regulator complex"/>
    <property type="evidence" value="ECO:0000305"/>
    <property type="project" value="MGI"/>
</dbReference>
<dbReference type="GO" id="GO:0003677">
    <property type="term" value="F:DNA binding"/>
    <property type="evidence" value="ECO:0007669"/>
    <property type="project" value="UniProtKB-KW"/>
</dbReference>
<dbReference type="GO" id="GO:0003700">
    <property type="term" value="F:DNA-binding transcription factor activity"/>
    <property type="evidence" value="ECO:0000314"/>
    <property type="project" value="MGI"/>
</dbReference>
<dbReference type="GO" id="GO:0045892">
    <property type="term" value="P:negative regulation of DNA-templated transcription"/>
    <property type="evidence" value="ECO:0000250"/>
    <property type="project" value="UniProtKB"/>
</dbReference>
<dbReference type="GO" id="GO:0051726">
    <property type="term" value="P:regulation of cell cycle"/>
    <property type="evidence" value="ECO:0007669"/>
    <property type="project" value="InterPro"/>
</dbReference>
<dbReference type="GO" id="GO:0006355">
    <property type="term" value="P:regulation of DNA-templated transcription"/>
    <property type="evidence" value="ECO:0000314"/>
    <property type="project" value="MGI"/>
</dbReference>
<dbReference type="CDD" id="cd14458">
    <property type="entry name" value="DP_DD"/>
    <property type="match status" value="1"/>
</dbReference>
<dbReference type="FunFam" id="1.10.10.10:FF:000047">
    <property type="entry name" value="Transcription factor"/>
    <property type="match status" value="1"/>
</dbReference>
<dbReference type="FunFam" id="1.20.140.80:FF:000001">
    <property type="entry name" value="Transcription factor"/>
    <property type="match status" value="1"/>
</dbReference>
<dbReference type="Gene3D" id="1.20.140.80">
    <property type="entry name" value="Transcription factor DP"/>
    <property type="match status" value="1"/>
</dbReference>
<dbReference type="Gene3D" id="1.10.10.10">
    <property type="entry name" value="Winged helix-like DNA-binding domain superfamily/Winged helix DNA-binding domain"/>
    <property type="match status" value="1"/>
</dbReference>
<dbReference type="InterPro" id="IPR037241">
    <property type="entry name" value="E2F-DP_heterodim"/>
</dbReference>
<dbReference type="InterPro" id="IPR003316">
    <property type="entry name" value="E2F_WHTH_DNA-bd_dom"/>
</dbReference>
<dbReference type="InterPro" id="IPR038168">
    <property type="entry name" value="TF_DP_C_sf"/>
</dbReference>
<dbReference type="InterPro" id="IPR014889">
    <property type="entry name" value="Transc_factor_DP_C"/>
</dbReference>
<dbReference type="InterPro" id="IPR015648">
    <property type="entry name" value="Transcrpt_fac_DP"/>
</dbReference>
<dbReference type="InterPro" id="IPR036388">
    <property type="entry name" value="WH-like_DNA-bd_sf"/>
</dbReference>
<dbReference type="InterPro" id="IPR036390">
    <property type="entry name" value="WH_DNA-bd_sf"/>
</dbReference>
<dbReference type="PANTHER" id="PTHR12548">
    <property type="entry name" value="TRANSCRIPTION FACTOR DP"/>
    <property type="match status" value="1"/>
</dbReference>
<dbReference type="PANTHER" id="PTHR12548:SF5">
    <property type="entry name" value="TRANSCRIPTION FACTOR DP-2"/>
    <property type="match status" value="1"/>
</dbReference>
<dbReference type="Pfam" id="PF08781">
    <property type="entry name" value="DP"/>
    <property type="match status" value="1"/>
</dbReference>
<dbReference type="Pfam" id="PF02319">
    <property type="entry name" value="E2F_TDP"/>
    <property type="match status" value="1"/>
</dbReference>
<dbReference type="PIRSF" id="PIRSF009404">
    <property type="entry name" value="Transcription_factor_DP"/>
    <property type="match status" value="1"/>
</dbReference>
<dbReference type="SMART" id="SM01138">
    <property type="entry name" value="DP"/>
    <property type="match status" value="1"/>
</dbReference>
<dbReference type="SMART" id="SM01372">
    <property type="entry name" value="E2F_TDP"/>
    <property type="match status" value="1"/>
</dbReference>
<dbReference type="SUPFAM" id="SSF144074">
    <property type="entry name" value="E2F-DP heterodimerization region"/>
    <property type="match status" value="1"/>
</dbReference>
<dbReference type="SUPFAM" id="SSF46785">
    <property type="entry name" value="Winged helix' DNA-binding domain"/>
    <property type="match status" value="1"/>
</dbReference>
<sequence>MTAKNVGLPSTNAKLRGFIDQNFSPSKGNISLVAFPVSSTNSPTKILPKTLGPINVNVGPQMIISTPQRIANSGSVLIGNPYTPAPAMVTQTHIAEAAGWVPSDRKRAREFIDSDFSESKRSKKGDKNGKGLRHFSMKVCEKVQRKGTTSYNEVADELVSEFTNSNNHLAADSAYDQENIRRRVYDALNVLMAMNIISSLPTGKKRNQVDCNSAQECQNLEIEKQRRIERIKQKRAQLQELLLQQIAFKNLVQRNRQNEQQNQGPPAVNSTIQLPFIIINTSRKTVIDCSISSDKFEYLFNFDNTFEIHDDIEVLKRMGMSFGLESGKCSLEDLKIARSLVPKALEGYITDISTGPSWLNQGLLLNSTQSVSNLDPTTGATVPQSSVNQGLCLDAEVALATGQLPASNSHQSSSAASHFSESRGETPCSFNDEDEEDEEEDPSSPE</sequence>
<evidence type="ECO:0000250" key="1">
    <source>
        <dbReference type="UniProtKB" id="Q14188"/>
    </source>
</evidence>
<evidence type="ECO:0000255" key="2"/>
<evidence type="ECO:0000256" key="3">
    <source>
        <dbReference type="SAM" id="MobiDB-lite"/>
    </source>
</evidence>
<evidence type="ECO:0000269" key="4">
    <source>
    </source>
</evidence>
<evidence type="ECO:0000269" key="5">
    <source>
    </source>
</evidence>
<evidence type="ECO:0000303" key="6">
    <source>
    </source>
</evidence>
<evidence type="ECO:0000305" key="7"/>
<gene>
    <name type="primary">Tfdp2</name>
    <name type="synonym">Dp2</name>
</gene>
<keyword id="KW-0007">Acetylation</keyword>
<keyword id="KW-0010">Activator</keyword>
<keyword id="KW-0025">Alternative splicing</keyword>
<keyword id="KW-0131">Cell cycle</keyword>
<keyword id="KW-0238">DNA-binding</keyword>
<keyword id="KW-0539">Nucleus</keyword>
<keyword id="KW-0597">Phosphoprotein</keyword>
<keyword id="KW-1185">Reference proteome</keyword>
<keyword id="KW-0804">Transcription</keyword>
<keyword id="KW-0805">Transcription regulation</keyword>
<reference key="1">
    <citation type="journal article" date="1995" name="Oncogene">
        <title>A new member of the DP family, DP-3, with distinct protein products suggests a regulatory role for alternative splicing in the cell cycle transcription factor DRTF1/E2F.</title>
        <authorList>
            <person name="Ormondroyd E."/>
            <person name="De La Luna S."/>
            <person name="La Thangue N.B."/>
        </authorList>
    </citation>
    <scope>NUCLEOTIDE SEQUENCE [MRNA] (ISOFORMS ALPHA; BETA; DELTA AND GAMMA)</scope>
    <source>
        <tissue>Brain</tissue>
        <tissue>Kidney</tissue>
    </source>
</reference>
<reference key="2">
    <citation type="journal article" date="1996" name="J. Cell Sci.">
        <title>Nuclear accumulation of the E2F heterodimer regulated by subunit composition and alternative splicing of a nuclear localization signal.</title>
        <authorList>
            <person name="de la Luna S."/>
            <person name="Burden M.J."/>
            <person name="Lee C.W."/>
            <person name="La Thangue N.B."/>
        </authorList>
    </citation>
    <scope>NUCLEAR LOCALIZATION SIGNAL</scope>
</reference>
<reference key="3">
    <citation type="journal article" date="1999" name="EMBO J.">
        <title>Integration of a growth-suppressing BTB/POZ domain protein with the DP component of the E2F transcription factor.</title>
        <authorList>
            <person name="de la Luna S."/>
            <person name="Allen K.E."/>
            <person name="Mason S.L."/>
            <person name="La Thangue N.B."/>
        </authorList>
    </citation>
    <scope>INTERACTION WITH GMCL</scope>
</reference>
<organism>
    <name type="scientific">Mus musculus</name>
    <name type="common">Mouse</name>
    <dbReference type="NCBI Taxonomy" id="10090"/>
    <lineage>
        <taxon>Eukaryota</taxon>
        <taxon>Metazoa</taxon>
        <taxon>Chordata</taxon>
        <taxon>Craniata</taxon>
        <taxon>Vertebrata</taxon>
        <taxon>Euteleostomi</taxon>
        <taxon>Mammalia</taxon>
        <taxon>Eutheria</taxon>
        <taxon>Euarchontoglires</taxon>
        <taxon>Glires</taxon>
        <taxon>Rodentia</taxon>
        <taxon>Myomorpha</taxon>
        <taxon>Muroidea</taxon>
        <taxon>Muridae</taxon>
        <taxon>Murinae</taxon>
        <taxon>Mus</taxon>
        <taxon>Mus</taxon>
    </lineage>
</organism>
<protein>
    <recommendedName>
        <fullName>Transcription factor Dp-2</fullName>
    </recommendedName>
    <alternativeName>
        <fullName>Dp-3</fullName>
    </alternativeName>
    <alternativeName>
        <fullName>E2F dimerization partner 2</fullName>
    </alternativeName>
</protein>
<name>TFDP2_MOUSE</name>
<accession>Q64163</accession>
<proteinExistence type="evidence at protein level"/>